<sequence length="243" mass="25201">MPTEIAPRDRLIVALDLPGVAEAEAMITRLGDAVTFYKIGMELTYAGGLGLAERLAADGKQVFMDLKLHDIPNTVERATRQIARLGARFLTVHGFSQSMTAALAGAAGSPLELLAVTVMTSYDDADLAAAGYAMGVKELVARRAVQAKQIGIHGLILSPEETQLVRPLVGPDMQLVTPGIRPAGSDVGDQKRIMTPALAIAGGADRLVVGRPVTGAADPAAAAESIVADIASALALVGKTNRT</sequence>
<keyword id="KW-0210">Decarboxylase</keyword>
<keyword id="KW-0456">Lyase</keyword>
<keyword id="KW-0665">Pyrimidine biosynthesis</keyword>
<keyword id="KW-1185">Reference proteome</keyword>
<accession>A5E8J8</accession>
<reference key="1">
    <citation type="journal article" date="2007" name="Science">
        <title>Legumes symbioses: absence of nod genes in photosynthetic bradyrhizobia.</title>
        <authorList>
            <person name="Giraud E."/>
            <person name="Moulin L."/>
            <person name="Vallenet D."/>
            <person name="Barbe V."/>
            <person name="Cytryn E."/>
            <person name="Avarre J.-C."/>
            <person name="Jaubert M."/>
            <person name="Simon D."/>
            <person name="Cartieaux F."/>
            <person name="Prin Y."/>
            <person name="Bena G."/>
            <person name="Hannibal L."/>
            <person name="Fardoux J."/>
            <person name="Kojadinovic M."/>
            <person name="Vuillet L."/>
            <person name="Lajus A."/>
            <person name="Cruveiller S."/>
            <person name="Rouy Z."/>
            <person name="Mangenot S."/>
            <person name="Segurens B."/>
            <person name="Dossat C."/>
            <person name="Franck W.L."/>
            <person name="Chang W.-S."/>
            <person name="Saunders E."/>
            <person name="Bruce D."/>
            <person name="Richardson P."/>
            <person name="Normand P."/>
            <person name="Dreyfus B."/>
            <person name="Pignol D."/>
            <person name="Stacey G."/>
            <person name="Emerich D."/>
            <person name="Vermeglio A."/>
            <person name="Medigue C."/>
            <person name="Sadowsky M."/>
        </authorList>
    </citation>
    <scope>NUCLEOTIDE SEQUENCE [LARGE SCALE GENOMIC DNA]</scope>
    <source>
        <strain>BTAi1 / ATCC BAA-1182</strain>
    </source>
</reference>
<comment type="function">
    <text evidence="1">Catalyzes the decarboxylation of orotidine 5'-monophosphate (OMP) to uridine 5'-monophosphate (UMP).</text>
</comment>
<comment type="catalytic activity">
    <reaction evidence="1">
        <text>orotidine 5'-phosphate + H(+) = UMP + CO2</text>
        <dbReference type="Rhea" id="RHEA:11596"/>
        <dbReference type="ChEBI" id="CHEBI:15378"/>
        <dbReference type="ChEBI" id="CHEBI:16526"/>
        <dbReference type="ChEBI" id="CHEBI:57538"/>
        <dbReference type="ChEBI" id="CHEBI:57865"/>
        <dbReference type="EC" id="4.1.1.23"/>
    </reaction>
</comment>
<comment type="pathway">
    <text evidence="1">Pyrimidine metabolism; UMP biosynthesis via de novo pathway; UMP from orotate: step 2/2.</text>
</comment>
<comment type="subunit">
    <text evidence="1">Homodimer.</text>
</comment>
<comment type="similarity">
    <text evidence="1">Belongs to the OMP decarboxylase family. Type 1 subfamily.</text>
</comment>
<feature type="chain" id="PRO_1000065895" description="Orotidine 5'-phosphate decarboxylase">
    <location>
        <begin position="1"/>
        <end position="243"/>
    </location>
</feature>
<feature type="active site" description="Proton donor" evidence="1">
    <location>
        <position position="67"/>
    </location>
</feature>
<feature type="binding site" evidence="1">
    <location>
        <position position="16"/>
    </location>
    <ligand>
        <name>substrate</name>
    </ligand>
</feature>
<feature type="binding site" evidence="1">
    <location>
        <position position="38"/>
    </location>
    <ligand>
        <name>substrate</name>
    </ligand>
</feature>
<feature type="binding site" evidence="1">
    <location>
        <begin position="65"/>
        <end position="74"/>
    </location>
    <ligand>
        <name>substrate</name>
    </ligand>
</feature>
<feature type="binding site" evidence="1">
    <location>
        <position position="120"/>
    </location>
    <ligand>
        <name>substrate</name>
    </ligand>
</feature>
<feature type="binding site" evidence="1">
    <location>
        <position position="181"/>
    </location>
    <ligand>
        <name>substrate</name>
    </ligand>
</feature>
<feature type="binding site" evidence="1">
    <location>
        <position position="190"/>
    </location>
    <ligand>
        <name>substrate</name>
    </ligand>
</feature>
<feature type="binding site" evidence="1">
    <location>
        <position position="210"/>
    </location>
    <ligand>
        <name>substrate</name>
    </ligand>
</feature>
<feature type="binding site" evidence="1">
    <location>
        <position position="211"/>
    </location>
    <ligand>
        <name>substrate</name>
    </ligand>
</feature>
<organism>
    <name type="scientific">Bradyrhizobium sp. (strain BTAi1 / ATCC BAA-1182)</name>
    <dbReference type="NCBI Taxonomy" id="288000"/>
    <lineage>
        <taxon>Bacteria</taxon>
        <taxon>Pseudomonadati</taxon>
        <taxon>Pseudomonadota</taxon>
        <taxon>Alphaproteobacteria</taxon>
        <taxon>Hyphomicrobiales</taxon>
        <taxon>Nitrobacteraceae</taxon>
        <taxon>Bradyrhizobium</taxon>
    </lineage>
</organism>
<name>PYRF_BRASB</name>
<gene>
    <name evidence="1" type="primary">pyrF</name>
    <name type="ordered locus">BBta_0195</name>
</gene>
<proteinExistence type="inferred from homology"/>
<evidence type="ECO:0000255" key="1">
    <source>
        <dbReference type="HAMAP-Rule" id="MF_01200"/>
    </source>
</evidence>
<dbReference type="EC" id="4.1.1.23" evidence="1"/>
<dbReference type="EMBL" id="CP000494">
    <property type="protein sequence ID" value="ABQ32492.1"/>
    <property type="molecule type" value="Genomic_DNA"/>
</dbReference>
<dbReference type="RefSeq" id="WP_012040550.1">
    <property type="nucleotide sequence ID" value="NC_009485.1"/>
</dbReference>
<dbReference type="SMR" id="A5E8J8"/>
<dbReference type="STRING" id="288000.BBta_0195"/>
<dbReference type="KEGG" id="bbt:BBta_0195"/>
<dbReference type="eggNOG" id="COG0284">
    <property type="taxonomic scope" value="Bacteria"/>
</dbReference>
<dbReference type="HOGENOM" id="CLU_067069_1_0_5"/>
<dbReference type="OrthoDB" id="9806203at2"/>
<dbReference type="UniPathway" id="UPA00070">
    <property type="reaction ID" value="UER00120"/>
</dbReference>
<dbReference type="Proteomes" id="UP000000246">
    <property type="component" value="Chromosome"/>
</dbReference>
<dbReference type="GO" id="GO:0005829">
    <property type="term" value="C:cytosol"/>
    <property type="evidence" value="ECO:0007669"/>
    <property type="project" value="TreeGrafter"/>
</dbReference>
<dbReference type="GO" id="GO:0004590">
    <property type="term" value="F:orotidine-5'-phosphate decarboxylase activity"/>
    <property type="evidence" value="ECO:0007669"/>
    <property type="project" value="UniProtKB-UniRule"/>
</dbReference>
<dbReference type="GO" id="GO:0006207">
    <property type="term" value="P:'de novo' pyrimidine nucleobase biosynthetic process"/>
    <property type="evidence" value="ECO:0007669"/>
    <property type="project" value="InterPro"/>
</dbReference>
<dbReference type="GO" id="GO:0044205">
    <property type="term" value="P:'de novo' UMP biosynthetic process"/>
    <property type="evidence" value="ECO:0007669"/>
    <property type="project" value="UniProtKB-UniRule"/>
</dbReference>
<dbReference type="CDD" id="cd04725">
    <property type="entry name" value="OMP_decarboxylase_like"/>
    <property type="match status" value="1"/>
</dbReference>
<dbReference type="Gene3D" id="3.20.20.70">
    <property type="entry name" value="Aldolase class I"/>
    <property type="match status" value="1"/>
</dbReference>
<dbReference type="HAMAP" id="MF_01200_B">
    <property type="entry name" value="OMPdecase_type1_B"/>
    <property type="match status" value="1"/>
</dbReference>
<dbReference type="InterPro" id="IPR013785">
    <property type="entry name" value="Aldolase_TIM"/>
</dbReference>
<dbReference type="InterPro" id="IPR014732">
    <property type="entry name" value="OMPdecase"/>
</dbReference>
<dbReference type="InterPro" id="IPR018089">
    <property type="entry name" value="OMPdecase_AS"/>
</dbReference>
<dbReference type="InterPro" id="IPR047596">
    <property type="entry name" value="OMPdecase_bac"/>
</dbReference>
<dbReference type="InterPro" id="IPR001754">
    <property type="entry name" value="OMPdeCOase_dom"/>
</dbReference>
<dbReference type="InterPro" id="IPR011060">
    <property type="entry name" value="RibuloseP-bd_barrel"/>
</dbReference>
<dbReference type="NCBIfam" id="NF001273">
    <property type="entry name" value="PRK00230.1"/>
    <property type="match status" value="1"/>
</dbReference>
<dbReference type="NCBIfam" id="TIGR01740">
    <property type="entry name" value="pyrF"/>
    <property type="match status" value="1"/>
</dbReference>
<dbReference type="PANTHER" id="PTHR32119">
    <property type="entry name" value="OROTIDINE 5'-PHOSPHATE DECARBOXYLASE"/>
    <property type="match status" value="1"/>
</dbReference>
<dbReference type="PANTHER" id="PTHR32119:SF2">
    <property type="entry name" value="OROTIDINE 5'-PHOSPHATE DECARBOXYLASE"/>
    <property type="match status" value="1"/>
</dbReference>
<dbReference type="Pfam" id="PF00215">
    <property type="entry name" value="OMPdecase"/>
    <property type="match status" value="1"/>
</dbReference>
<dbReference type="SMART" id="SM00934">
    <property type="entry name" value="OMPdecase"/>
    <property type="match status" value="1"/>
</dbReference>
<dbReference type="SUPFAM" id="SSF51366">
    <property type="entry name" value="Ribulose-phoshate binding barrel"/>
    <property type="match status" value="1"/>
</dbReference>
<dbReference type="PROSITE" id="PS00156">
    <property type="entry name" value="OMPDECASE"/>
    <property type="match status" value="1"/>
</dbReference>
<protein>
    <recommendedName>
        <fullName evidence="1">Orotidine 5'-phosphate decarboxylase</fullName>
        <ecNumber evidence="1">4.1.1.23</ecNumber>
    </recommendedName>
    <alternativeName>
        <fullName evidence="1">OMP decarboxylase</fullName>
        <shortName evidence="1">OMPDCase</shortName>
        <shortName evidence="1">OMPdecase</shortName>
    </alternativeName>
</protein>